<name>CARP3_RHINI</name>
<evidence type="ECO:0000250" key="1"/>
<evidence type="ECO:0000255" key="2"/>
<evidence type="ECO:0000255" key="3">
    <source>
        <dbReference type="PROSITE-ProRule" id="PRU01103"/>
    </source>
</evidence>
<evidence type="ECO:0000255" key="4">
    <source>
        <dbReference type="PROSITE-ProRule" id="PRU10094"/>
    </source>
</evidence>
<evidence type="ECO:0000305" key="5"/>
<organism>
    <name type="scientific">Rhizopus niveus</name>
    <dbReference type="NCBI Taxonomy" id="4844"/>
    <lineage>
        <taxon>Eukaryota</taxon>
        <taxon>Fungi</taxon>
        <taxon>Fungi incertae sedis</taxon>
        <taxon>Mucoromycota</taxon>
        <taxon>Mucoromycotina</taxon>
        <taxon>Mucoromycetes</taxon>
        <taxon>Mucorales</taxon>
        <taxon>Mucorineae</taxon>
        <taxon>Rhizopodaceae</taxon>
        <taxon>Rhizopus</taxon>
    </lineage>
</organism>
<feature type="signal peptide" evidence="2">
    <location>
        <begin position="1"/>
        <end position="21"/>
    </location>
</feature>
<feature type="propeptide" id="PRO_0000025887" description="Activation peptide" evidence="2">
    <location>
        <begin position="22"/>
        <end position="68"/>
    </location>
</feature>
<feature type="chain" id="PRO_0000025888" description="Rhizopuspepsin-3">
    <location>
        <begin position="69"/>
        <end position="391"/>
    </location>
</feature>
<feature type="domain" description="Peptidase A1" evidence="3">
    <location>
        <begin position="84"/>
        <end position="388"/>
    </location>
</feature>
<feature type="active site" evidence="4">
    <location>
        <position position="102"/>
    </location>
</feature>
<feature type="active site" evidence="4">
    <location>
        <position position="285"/>
    </location>
</feature>
<feature type="disulfide bond" evidence="1">
    <location>
        <begin position="115"/>
        <end position="118"/>
    </location>
</feature>
<feature type="disulfide bond" evidence="1">
    <location>
        <begin position="319"/>
        <end position="352"/>
    </location>
</feature>
<keyword id="KW-0064">Aspartyl protease</keyword>
<keyword id="KW-1015">Disulfide bond</keyword>
<keyword id="KW-0378">Hydrolase</keyword>
<keyword id="KW-0645">Protease</keyword>
<keyword id="KW-0732">Signal</keyword>
<keyword id="KW-0865">Zymogen</keyword>
<accession>Q03699</accession>
<comment type="catalytic activity">
    <reaction>
        <text>Hydrolysis of proteins with broad specificity similar to that of pepsin A, preferring hydrophobic residues at P1 and P1'. Clots milk and activates trypsinogen. Does not cleave 4-Gln-|-His-5, but does cleave 10-His-|-Leu-11 and 12-Val-|-Glu-13 in B chain of insulin.</text>
        <dbReference type="EC" id="3.4.23.21"/>
    </reaction>
</comment>
<comment type="similarity">
    <text evidence="5">Belongs to the peptidase A1 family.</text>
</comment>
<protein>
    <recommendedName>
        <fullName>Rhizopuspepsin-3</fullName>
        <ecNumber>3.4.23.21</ecNumber>
    </recommendedName>
    <alternativeName>
        <fullName>Aspartate protease</fullName>
    </alternativeName>
</protein>
<proteinExistence type="inferred from homology"/>
<sequence length="391" mass="41533">MKFTLISSCVTLALMTLSIEAAPSGKKVNIPLTKNKDYKPNAKNAIQKAIAKYHRHRSVSSSNSTSTDGIGYVPVTDYYNDIEYYGEVTVGTPGVTLKLDFDTGSSDLWFASSLCTNCGSSQTKYNPNESSTYARDGRTWSISYGDGSSASGILGTDTVILGGLTIRHQTIELARREASQFQSGPSDGLLGLGFDSITTVRGVKTPVDNLISQGLISNPVFGVYLGKESNGGGGEYIFGGYDSSKFKGSLTTIPVDNSNGWYGITVRGTSIGGSRVSSSFDAILDTGTSLLVLPNDVASSVAEAYGASDNYDGTFSISCDTSSFEPLVFTIGSSTFEVPADSLVYEQDGYSCIAGFGYGDYDFAIFGDVFLKNNYVVFNPEVPHVQIAPIA</sequence>
<dbReference type="EC" id="3.4.23.21"/>
<dbReference type="EMBL" id="X56965">
    <property type="protein sequence ID" value="CAA40285.1"/>
    <property type="molecule type" value="Genomic_DNA"/>
</dbReference>
<dbReference type="PIR" id="JU0343">
    <property type="entry name" value="JU0343"/>
</dbReference>
<dbReference type="SMR" id="Q03699"/>
<dbReference type="MEROPS" id="A01.012"/>
<dbReference type="GO" id="GO:0004190">
    <property type="term" value="F:aspartic-type endopeptidase activity"/>
    <property type="evidence" value="ECO:0007669"/>
    <property type="project" value="UniProtKB-KW"/>
</dbReference>
<dbReference type="GO" id="GO:0006508">
    <property type="term" value="P:proteolysis"/>
    <property type="evidence" value="ECO:0007669"/>
    <property type="project" value="UniProtKB-KW"/>
</dbReference>
<dbReference type="FunFam" id="2.40.70.10:FF:000115">
    <property type="entry name" value="Lysosomal aspartic protease"/>
    <property type="match status" value="1"/>
</dbReference>
<dbReference type="Gene3D" id="2.40.70.10">
    <property type="entry name" value="Acid Proteases"/>
    <property type="match status" value="2"/>
</dbReference>
<dbReference type="InterPro" id="IPR001461">
    <property type="entry name" value="Aspartic_peptidase_A1"/>
</dbReference>
<dbReference type="InterPro" id="IPR001969">
    <property type="entry name" value="Aspartic_peptidase_AS"/>
</dbReference>
<dbReference type="InterPro" id="IPR033121">
    <property type="entry name" value="PEPTIDASE_A1"/>
</dbReference>
<dbReference type="InterPro" id="IPR021109">
    <property type="entry name" value="Peptidase_aspartic_dom_sf"/>
</dbReference>
<dbReference type="PANTHER" id="PTHR47966:SF1">
    <property type="entry name" value="ASPARTYL PROTEINASE"/>
    <property type="match status" value="1"/>
</dbReference>
<dbReference type="PANTHER" id="PTHR47966">
    <property type="entry name" value="BETA-SITE APP-CLEAVING ENZYME, ISOFORM A-RELATED"/>
    <property type="match status" value="1"/>
</dbReference>
<dbReference type="Pfam" id="PF00026">
    <property type="entry name" value="Asp"/>
    <property type="match status" value="1"/>
</dbReference>
<dbReference type="PRINTS" id="PR00792">
    <property type="entry name" value="PEPSIN"/>
</dbReference>
<dbReference type="SUPFAM" id="SSF50630">
    <property type="entry name" value="Acid proteases"/>
    <property type="match status" value="1"/>
</dbReference>
<dbReference type="PROSITE" id="PS00141">
    <property type="entry name" value="ASP_PROTEASE"/>
    <property type="match status" value="2"/>
</dbReference>
<dbReference type="PROSITE" id="PS51767">
    <property type="entry name" value="PEPTIDASE_A1"/>
    <property type="match status" value="1"/>
</dbReference>
<reference key="1">
    <citation type="submission" date="1990-12" db="EMBL/GenBank/DDBJ databases">
        <authorList>
            <person name="Horiuchi H."/>
            <person name="Nakamura H."/>
            <person name="Okazaki T."/>
            <person name="Yano K."/>
            <person name="Takagi M."/>
        </authorList>
    </citation>
    <scope>NUCLEOTIDE SEQUENCE [GENOMIC DNA]</scope>
    <source>
        <strain>NBRC 4810 / AS 3.4817</strain>
    </source>
</reference>